<gene>
    <name type="primary">ESA1</name>
    <name type="ORF">FGRRES_04254</name>
    <name type="ORF">FGSG_04254</name>
</gene>
<evidence type="ECO:0000250" key="1"/>
<evidence type="ECO:0000250" key="2">
    <source>
        <dbReference type="UniProtKB" id="O94446"/>
    </source>
</evidence>
<evidence type="ECO:0000250" key="3">
    <source>
        <dbReference type="UniProtKB" id="Q08649"/>
    </source>
</evidence>
<evidence type="ECO:0000255" key="4"/>
<evidence type="ECO:0000255" key="5">
    <source>
        <dbReference type="PROSITE-ProRule" id="PRU01063"/>
    </source>
</evidence>
<evidence type="ECO:0000256" key="6">
    <source>
        <dbReference type="SAM" id="MobiDB-lite"/>
    </source>
</evidence>
<evidence type="ECO:0000305" key="7"/>
<sequence length="502" mass="58095">MAGGTPGGEPTVGSGEPRLKSLATPETIKTGCIAWVEKEGQPRRAEILSIKTTKSGKQFYCNFDNFNKRLDEWVPVIRLDFTREVEWPNPEKEKPKDPKAKKAPTVQSKKTQPSKKSQKRPSKREQSTTSEANTPHPWTDFVENQNRQKSASIGPDGDSQARASVDGGETPGGGDEMEVDERETEVKREPAEFSREVEIEKLRTSGSMTQNPTEVSRIRNISKVQFGRFDLYPWYFSPYPEIFSQEDVIFICEFCLSYYGDLKAFTRHRKKCTLQHPPGNELYRNEEISFFEIDGRRQRTWCRNLCLLSKMFLDHKTLYYDVDPFLFYVMTVRTEKGCHMVGYFSKEKESADGYNVACILTMPQYQRKGYGRLLIQFSYELSRIEGKLGSPEKPLSDLGLLSYRQYWSENILEFLMGYNERDEKVTIEAISTALAMTTQDVEHTLQALRMQVYHKSDHKIVIPEKLIEQREKTKLKRKRTVDPTKIQWKPPVFTASSRTWGW</sequence>
<reference key="1">
    <citation type="journal article" date="2007" name="Science">
        <title>The Fusarium graminearum genome reveals a link between localized polymorphism and pathogen specialization.</title>
        <authorList>
            <person name="Cuomo C.A."/>
            <person name="Gueldener U."/>
            <person name="Xu J.-R."/>
            <person name="Trail F."/>
            <person name="Turgeon B.G."/>
            <person name="Di Pietro A."/>
            <person name="Walton J.D."/>
            <person name="Ma L.-J."/>
            <person name="Baker S.E."/>
            <person name="Rep M."/>
            <person name="Adam G."/>
            <person name="Antoniw J."/>
            <person name="Baldwin T."/>
            <person name="Calvo S.E."/>
            <person name="Chang Y.-L."/>
            <person name="DeCaprio D."/>
            <person name="Gale L.R."/>
            <person name="Gnerre S."/>
            <person name="Goswami R.S."/>
            <person name="Hammond-Kosack K."/>
            <person name="Harris L.J."/>
            <person name="Hilburn K."/>
            <person name="Kennell J.C."/>
            <person name="Kroken S."/>
            <person name="Magnuson J.K."/>
            <person name="Mannhaupt G."/>
            <person name="Mauceli E.W."/>
            <person name="Mewes H.-W."/>
            <person name="Mitterbauer R."/>
            <person name="Muehlbauer G."/>
            <person name="Muensterkoetter M."/>
            <person name="Nelson D."/>
            <person name="O'Donnell K."/>
            <person name="Ouellet T."/>
            <person name="Qi W."/>
            <person name="Quesneville H."/>
            <person name="Roncero M.I.G."/>
            <person name="Seong K.-Y."/>
            <person name="Tetko I.V."/>
            <person name="Urban M."/>
            <person name="Waalwijk C."/>
            <person name="Ward T.J."/>
            <person name="Yao J."/>
            <person name="Birren B.W."/>
            <person name="Kistler H.C."/>
        </authorList>
    </citation>
    <scope>NUCLEOTIDE SEQUENCE [LARGE SCALE GENOMIC DNA]</scope>
    <source>
        <strain>ATCC MYA-4620 / CBS 123657 / FGSC 9075 / NRRL 31084 / PH-1</strain>
    </source>
</reference>
<reference key="2">
    <citation type="journal article" date="2010" name="Nature">
        <title>Comparative genomics reveals mobile pathogenicity chromosomes in Fusarium.</title>
        <authorList>
            <person name="Ma L.-J."/>
            <person name="van der Does H.C."/>
            <person name="Borkovich K.A."/>
            <person name="Coleman J.J."/>
            <person name="Daboussi M.-J."/>
            <person name="Di Pietro A."/>
            <person name="Dufresne M."/>
            <person name="Freitag M."/>
            <person name="Grabherr M."/>
            <person name="Henrissat B."/>
            <person name="Houterman P.M."/>
            <person name="Kang S."/>
            <person name="Shim W.-B."/>
            <person name="Woloshuk C."/>
            <person name="Xie X."/>
            <person name="Xu J.-R."/>
            <person name="Antoniw J."/>
            <person name="Baker S.E."/>
            <person name="Bluhm B.H."/>
            <person name="Breakspear A."/>
            <person name="Brown D.W."/>
            <person name="Butchko R.A.E."/>
            <person name="Chapman S."/>
            <person name="Coulson R."/>
            <person name="Coutinho P.M."/>
            <person name="Danchin E.G.J."/>
            <person name="Diener A."/>
            <person name="Gale L.R."/>
            <person name="Gardiner D.M."/>
            <person name="Goff S."/>
            <person name="Hammond-Kosack K.E."/>
            <person name="Hilburn K."/>
            <person name="Hua-Van A."/>
            <person name="Jonkers W."/>
            <person name="Kazan K."/>
            <person name="Kodira C.D."/>
            <person name="Koehrsen M."/>
            <person name="Kumar L."/>
            <person name="Lee Y.-H."/>
            <person name="Li L."/>
            <person name="Manners J.M."/>
            <person name="Miranda-Saavedra D."/>
            <person name="Mukherjee M."/>
            <person name="Park G."/>
            <person name="Park J."/>
            <person name="Park S.-Y."/>
            <person name="Proctor R.H."/>
            <person name="Regev A."/>
            <person name="Ruiz-Roldan M.C."/>
            <person name="Sain D."/>
            <person name="Sakthikumar S."/>
            <person name="Sykes S."/>
            <person name="Schwartz D.C."/>
            <person name="Turgeon B.G."/>
            <person name="Wapinski I."/>
            <person name="Yoder O."/>
            <person name="Young S."/>
            <person name="Zeng Q."/>
            <person name="Zhou S."/>
            <person name="Galagan J."/>
            <person name="Cuomo C.A."/>
            <person name="Kistler H.C."/>
            <person name="Rep M."/>
        </authorList>
    </citation>
    <scope>GENOME REANNOTATION</scope>
    <source>
        <strain>ATCC MYA-4620 / CBS 123657 / FGSC 9075 / NRRL 31084 / PH-1</strain>
    </source>
</reference>
<reference key="3">
    <citation type="journal article" date="2015" name="BMC Genomics">
        <title>The completed genome sequence of the pathogenic ascomycete fungus Fusarium graminearum.</title>
        <authorList>
            <person name="King R."/>
            <person name="Urban M."/>
            <person name="Hammond-Kosack M.C.U."/>
            <person name="Hassani-Pak K."/>
            <person name="Hammond-Kosack K.E."/>
        </authorList>
    </citation>
    <scope>NUCLEOTIDE SEQUENCE [LARGE SCALE GENOMIC DNA]</scope>
    <source>
        <strain>ATCC MYA-4620 / CBS 123657 / FGSC 9075 / NRRL 31084 / PH-1</strain>
    </source>
</reference>
<accession>Q4IEV4</accession>
<accession>A0A0E0S6V1</accession>
<accession>V6R4L8</accession>
<keyword id="KW-0007">Acetylation</keyword>
<keyword id="KW-0010">Activator</keyword>
<keyword id="KW-0156">Chromatin regulator</keyword>
<keyword id="KW-0158">Chromosome</keyword>
<keyword id="KW-0227">DNA damage</keyword>
<keyword id="KW-0234">DNA repair</keyword>
<keyword id="KW-0479">Metal-binding</keyword>
<keyword id="KW-0539">Nucleus</keyword>
<keyword id="KW-1185">Reference proteome</keyword>
<keyword id="KW-0804">Transcription</keyword>
<keyword id="KW-0805">Transcription regulation</keyword>
<keyword id="KW-0808">Transferase</keyword>
<keyword id="KW-0862">Zinc</keyword>
<keyword id="KW-0863">Zinc-finger</keyword>
<feature type="chain" id="PRO_0000051557" description="Histone acetyltransferase ESA1">
    <location>
        <begin position="1"/>
        <end position="502"/>
    </location>
</feature>
<feature type="domain" description="Tudor-knot" evidence="4">
    <location>
        <begin position="28"/>
        <end position="80"/>
    </location>
</feature>
<feature type="domain" description="MYST-type HAT" evidence="5">
    <location>
        <begin position="216"/>
        <end position="490"/>
    </location>
</feature>
<feature type="zinc finger region" description="C2HC MYST-type" evidence="5">
    <location>
        <begin position="249"/>
        <end position="274"/>
    </location>
</feature>
<feature type="region of interest" description="Disordered" evidence="6">
    <location>
        <begin position="1"/>
        <end position="24"/>
    </location>
</feature>
<feature type="region of interest" description="Disordered" evidence="6">
    <location>
        <begin position="88"/>
        <end position="194"/>
    </location>
</feature>
<feature type="short sequence motif" description="ESA1-RPD3 motif" evidence="1">
    <location>
        <begin position="299"/>
        <end position="320"/>
    </location>
</feature>
<feature type="compositionally biased region" description="Basic and acidic residues" evidence="6">
    <location>
        <begin position="88"/>
        <end position="100"/>
    </location>
</feature>
<feature type="compositionally biased region" description="Basic residues" evidence="6">
    <location>
        <begin position="112"/>
        <end position="122"/>
    </location>
</feature>
<feature type="compositionally biased region" description="Polar residues" evidence="6">
    <location>
        <begin position="142"/>
        <end position="151"/>
    </location>
</feature>
<feature type="compositionally biased region" description="Basic and acidic residues" evidence="6">
    <location>
        <begin position="184"/>
        <end position="194"/>
    </location>
</feature>
<feature type="active site" description="Proton donor/acceptor" evidence="3">
    <location>
        <position position="392"/>
    </location>
</feature>
<feature type="binding site" evidence="3">
    <location>
        <begin position="357"/>
        <end position="361"/>
    </location>
    <ligand>
        <name>acetyl-CoA</name>
        <dbReference type="ChEBI" id="CHEBI:57288"/>
    </ligand>
</feature>
<feature type="binding site" evidence="3">
    <location>
        <begin position="366"/>
        <end position="372"/>
    </location>
    <ligand>
        <name>acetyl-CoA</name>
        <dbReference type="ChEBI" id="CHEBI:57288"/>
    </ligand>
</feature>
<feature type="binding site" evidence="3">
    <location>
        <position position="396"/>
    </location>
    <ligand>
        <name>acetyl-CoA</name>
        <dbReference type="ChEBI" id="CHEBI:57288"/>
    </ligand>
</feature>
<feature type="site" description="Important for catalytic activity" evidence="3">
    <location>
        <position position="358"/>
    </location>
</feature>
<feature type="modified residue" description="N6-acetyllysine; by autocatalysis" evidence="3">
    <location>
        <position position="316"/>
    </location>
</feature>
<protein>
    <recommendedName>
        <fullName>Histone acetyltransferase ESA1</fullName>
        <ecNumber evidence="3">2.3.1.48</ecNumber>
    </recommendedName>
    <alternativeName>
        <fullName evidence="7">Protein 2-hydroxyisobutyryltransferase ESA1</fullName>
        <ecNumber evidence="2">2.3.1.-</ecNumber>
    </alternativeName>
    <alternativeName>
        <fullName evidence="7">Protein acetyltransferase ESA1</fullName>
        <ecNumber evidence="3">2.3.1.-</ecNumber>
    </alternativeName>
    <alternativeName>
        <fullName evidence="7">Protein crotonyltransferase ESA1</fullName>
        <ecNumber evidence="3">2.3.1.-</ecNumber>
    </alternativeName>
</protein>
<name>ESA1_GIBZE</name>
<proteinExistence type="inferred from homology"/>
<organism>
    <name type="scientific">Gibberella zeae (strain ATCC MYA-4620 / CBS 123657 / FGSC 9075 / NRRL 31084 / PH-1)</name>
    <name type="common">Wheat head blight fungus</name>
    <name type="synonym">Fusarium graminearum</name>
    <dbReference type="NCBI Taxonomy" id="229533"/>
    <lineage>
        <taxon>Eukaryota</taxon>
        <taxon>Fungi</taxon>
        <taxon>Dikarya</taxon>
        <taxon>Ascomycota</taxon>
        <taxon>Pezizomycotina</taxon>
        <taxon>Sordariomycetes</taxon>
        <taxon>Hypocreomycetidae</taxon>
        <taxon>Hypocreales</taxon>
        <taxon>Nectriaceae</taxon>
        <taxon>Fusarium</taxon>
    </lineage>
</organism>
<dbReference type="EC" id="2.3.1.48" evidence="3"/>
<dbReference type="EC" id="2.3.1.-" evidence="2 3"/>
<dbReference type="EMBL" id="DS231664">
    <property type="protein sequence ID" value="ESU08867.1"/>
    <property type="molecule type" value="Genomic_DNA"/>
</dbReference>
<dbReference type="EMBL" id="HG970333">
    <property type="protein sequence ID" value="CEF79226.1"/>
    <property type="molecule type" value="Genomic_DNA"/>
</dbReference>
<dbReference type="RefSeq" id="XP_011321366.1">
    <property type="nucleotide sequence ID" value="XM_011323064.1"/>
</dbReference>
<dbReference type="SMR" id="Q4IEV4"/>
<dbReference type="FunCoup" id="Q4IEV4">
    <property type="interactions" value="952"/>
</dbReference>
<dbReference type="STRING" id="229533.Q4IEV4"/>
<dbReference type="GeneID" id="23551513"/>
<dbReference type="KEGG" id="fgr:FGSG_04254"/>
<dbReference type="VEuPathDB" id="FungiDB:FGRAMPH1_01G14849"/>
<dbReference type="eggNOG" id="KOG2747">
    <property type="taxonomic scope" value="Eukaryota"/>
</dbReference>
<dbReference type="HOGENOM" id="CLU_011815_2_0_1"/>
<dbReference type="InParanoid" id="Q4IEV4"/>
<dbReference type="OrthoDB" id="52978at110618"/>
<dbReference type="PHI-base" id="PHI:1637"/>
<dbReference type="Proteomes" id="UP000070720">
    <property type="component" value="Chromosome 2"/>
</dbReference>
<dbReference type="GO" id="GO:0000785">
    <property type="term" value="C:chromatin"/>
    <property type="evidence" value="ECO:0007669"/>
    <property type="project" value="TreeGrafter"/>
</dbReference>
<dbReference type="GO" id="GO:0005634">
    <property type="term" value="C:nucleus"/>
    <property type="evidence" value="ECO:0007669"/>
    <property type="project" value="UniProtKB-SubCell"/>
</dbReference>
<dbReference type="GO" id="GO:0003682">
    <property type="term" value="F:chromatin binding"/>
    <property type="evidence" value="ECO:0007669"/>
    <property type="project" value="TreeGrafter"/>
</dbReference>
<dbReference type="GO" id="GO:0004402">
    <property type="term" value="F:histone acetyltransferase activity"/>
    <property type="evidence" value="ECO:0007669"/>
    <property type="project" value="UniProtKB-EC"/>
</dbReference>
<dbReference type="GO" id="GO:0106226">
    <property type="term" value="F:peptide 2-hydroxyisobutyryltransferase activity"/>
    <property type="evidence" value="ECO:0007669"/>
    <property type="project" value="RHEA"/>
</dbReference>
<dbReference type="GO" id="GO:0140064">
    <property type="term" value="F:peptide crotonyltransferase activity"/>
    <property type="evidence" value="ECO:0007669"/>
    <property type="project" value="RHEA"/>
</dbReference>
<dbReference type="GO" id="GO:0003712">
    <property type="term" value="F:transcription coregulator activity"/>
    <property type="evidence" value="ECO:0007669"/>
    <property type="project" value="TreeGrafter"/>
</dbReference>
<dbReference type="GO" id="GO:0008270">
    <property type="term" value="F:zinc ion binding"/>
    <property type="evidence" value="ECO:0007669"/>
    <property type="project" value="UniProtKB-KW"/>
</dbReference>
<dbReference type="GO" id="GO:0006281">
    <property type="term" value="P:DNA repair"/>
    <property type="evidence" value="ECO:0007669"/>
    <property type="project" value="UniProtKB-KW"/>
</dbReference>
<dbReference type="GO" id="GO:0006357">
    <property type="term" value="P:regulation of transcription by RNA polymerase II"/>
    <property type="evidence" value="ECO:0007669"/>
    <property type="project" value="TreeGrafter"/>
</dbReference>
<dbReference type="CDD" id="cd04301">
    <property type="entry name" value="NAT_SF"/>
    <property type="match status" value="1"/>
</dbReference>
<dbReference type="FunFam" id="1.10.10.10:FF:000022">
    <property type="entry name" value="Histone acetyltransferase"/>
    <property type="match status" value="1"/>
</dbReference>
<dbReference type="FunFam" id="3.30.60.60:FF:000001">
    <property type="entry name" value="Histone acetyltransferase"/>
    <property type="match status" value="1"/>
</dbReference>
<dbReference type="FunFam" id="3.40.630.30:FF:000002">
    <property type="entry name" value="Histone acetyltransferase"/>
    <property type="match status" value="1"/>
</dbReference>
<dbReference type="Gene3D" id="2.30.30.140">
    <property type="match status" value="1"/>
</dbReference>
<dbReference type="Gene3D" id="3.40.630.30">
    <property type="match status" value="1"/>
</dbReference>
<dbReference type="Gene3D" id="3.30.60.60">
    <property type="entry name" value="N-acetyl transferase-like"/>
    <property type="match status" value="1"/>
</dbReference>
<dbReference type="Gene3D" id="1.10.10.10">
    <property type="entry name" value="Winged helix-like DNA-binding domain superfamily/Winged helix DNA-binding domain"/>
    <property type="match status" value="1"/>
</dbReference>
<dbReference type="InterPro" id="IPR016181">
    <property type="entry name" value="Acyl_CoA_acyltransferase"/>
</dbReference>
<dbReference type="InterPro" id="IPR016197">
    <property type="entry name" value="Chromo-like_dom_sf"/>
</dbReference>
<dbReference type="InterPro" id="IPR002717">
    <property type="entry name" value="HAT_MYST-type"/>
</dbReference>
<dbReference type="InterPro" id="IPR050603">
    <property type="entry name" value="MYST_HAT"/>
</dbReference>
<dbReference type="InterPro" id="IPR025995">
    <property type="entry name" value="Tudor-knot"/>
</dbReference>
<dbReference type="InterPro" id="IPR036388">
    <property type="entry name" value="WH-like_DNA-bd_sf"/>
</dbReference>
<dbReference type="InterPro" id="IPR040706">
    <property type="entry name" value="Zf-MYST"/>
</dbReference>
<dbReference type="PANTHER" id="PTHR10615">
    <property type="entry name" value="HISTONE ACETYLTRANSFERASE"/>
    <property type="match status" value="1"/>
</dbReference>
<dbReference type="PANTHER" id="PTHR10615:SF218">
    <property type="entry name" value="HISTONE ACETYLTRANSFERASE ESA1"/>
    <property type="match status" value="1"/>
</dbReference>
<dbReference type="Pfam" id="PF01853">
    <property type="entry name" value="MOZ_SAS"/>
    <property type="match status" value="1"/>
</dbReference>
<dbReference type="Pfam" id="PF11717">
    <property type="entry name" value="Tudor-knot"/>
    <property type="match status" value="1"/>
</dbReference>
<dbReference type="Pfam" id="PF17772">
    <property type="entry name" value="zf-MYST"/>
    <property type="match status" value="1"/>
</dbReference>
<dbReference type="SUPFAM" id="SSF55729">
    <property type="entry name" value="Acyl-CoA N-acyltransferases (Nat)"/>
    <property type="match status" value="1"/>
</dbReference>
<dbReference type="SUPFAM" id="SSF54160">
    <property type="entry name" value="Chromo domain-like"/>
    <property type="match status" value="1"/>
</dbReference>
<dbReference type="PROSITE" id="PS51726">
    <property type="entry name" value="MYST_HAT"/>
    <property type="match status" value="1"/>
</dbReference>
<comment type="function">
    <text evidence="2 3">Catalytic component of the NuA4 histone acetyltransferase (HAT) complex which is involved in epigenetic transcriptional activation of selected genes principally by acetylation of nucleosomal histones H4, H3, H2B, H2A and H2A variant H2A.Z (By similarity). Acetylates histone H4 to form H4K5ac, H4K8ac, H4K12ac and H4K16ac, histone H3 to form H3K14ac, and histone H2A to form H2AK4ac and H2AK7ac (By similarity). The NuA4 complex is involved in the DNA damage response and is required for chromosome segregation. The NuA4 complex plays a direct role in repair of DNA double-strand breaks (DSBs) through homologous recombination (By similarity). Recruitment to promoters depends on H3K4me. Also acetylates non-histone proteins (By similarity). In addition to protein acetyltransferase, can use different acyl-CoA substrates, such as 2-hydroxyisobutanoyl-CoA (2-hydroxyisobutyryl-CoA) or (2E)-butenoyl-CoA (crotonyl-CoA), and is able to mediate protein 2-hydroxyisobutyrylation and crotonylation, respectively (By similarity).</text>
</comment>
<comment type="catalytic activity">
    <reaction evidence="2">
        <text>L-lysyl-[histone] + acetyl-CoA = N(6)-acetyl-L-lysyl-[histone] + CoA + H(+)</text>
        <dbReference type="Rhea" id="RHEA:21992"/>
        <dbReference type="Rhea" id="RHEA-COMP:9845"/>
        <dbReference type="Rhea" id="RHEA-COMP:11338"/>
        <dbReference type="ChEBI" id="CHEBI:15378"/>
        <dbReference type="ChEBI" id="CHEBI:29969"/>
        <dbReference type="ChEBI" id="CHEBI:57287"/>
        <dbReference type="ChEBI" id="CHEBI:57288"/>
        <dbReference type="ChEBI" id="CHEBI:61930"/>
        <dbReference type="EC" id="2.3.1.48"/>
    </reaction>
    <physiologicalReaction direction="left-to-right" evidence="2">
        <dbReference type="Rhea" id="RHEA:21993"/>
    </physiologicalReaction>
</comment>
<comment type="catalytic activity">
    <reaction evidence="3">
        <text>L-lysyl-[protein] + acetyl-CoA = N(6)-acetyl-L-lysyl-[protein] + CoA + H(+)</text>
        <dbReference type="Rhea" id="RHEA:45948"/>
        <dbReference type="Rhea" id="RHEA-COMP:9752"/>
        <dbReference type="Rhea" id="RHEA-COMP:10731"/>
        <dbReference type="ChEBI" id="CHEBI:15378"/>
        <dbReference type="ChEBI" id="CHEBI:29969"/>
        <dbReference type="ChEBI" id="CHEBI:57287"/>
        <dbReference type="ChEBI" id="CHEBI:57288"/>
        <dbReference type="ChEBI" id="CHEBI:61930"/>
    </reaction>
    <physiologicalReaction direction="left-to-right" evidence="3">
        <dbReference type="Rhea" id="RHEA:45949"/>
    </physiologicalReaction>
</comment>
<comment type="catalytic activity">
    <reaction evidence="2">
        <text>2-hydroxyisobutanoyl-CoA + L-lysyl-[protein] = N(6)-(2-hydroxyisobutanoyl)-L-lysyl-[protein] + CoA + H(+)</text>
        <dbReference type="Rhea" id="RHEA:24180"/>
        <dbReference type="Rhea" id="RHEA-COMP:9752"/>
        <dbReference type="Rhea" id="RHEA-COMP:15921"/>
        <dbReference type="ChEBI" id="CHEBI:15378"/>
        <dbReference type="ChEBI" id="CHEBI:29969"/>
        <dbReference type="ChEBI" id="CHEBI:57287"/>
        <dbReference type="ChEBI" id="CHEBI:131780"/>
        <dbReference type="ChEBI" id="CHEBI:144968"/>
    </reaction>
    <physiologicalReaction direction="left-to-right" evidence="2">
        <dbReference type="Rhea" id="RHEA:24181"/>
    </physiologicalReaction>
</comment>
<comment type="catalytic activity">
    <reaction evidence="3">
        <text>(2E)-butenoyl-CoA + L-lysyl-[protein] = N(6)-(2E)-butenoyl-L-lysyl-[protein] + CoA + H(+)</text>
        <dbReference type="Rhea" id="RHEA:53908"/>
        <dbReference type="Rhea" id="RHEA-COMP:9752"/>
        <dbReference type="Rhea" id="RHEA-COMP:13707"/>
        <dbReference type="ChEBI" id="CHEBI:15378"/>
        <dbReference type="ChEBI" id="CHEBI:29969"/>
        <dbReference type="ChEBI" id="CHEBI:57287"/>
        <dbReference type="ChEBI" id="CHEBI:57332"/>
        <dbReference type="ChEBI" id="CHEBI:137954"/>
    </reaction>
    <physiologicalReaction direction="left-to-right" evidence="3">
        <dbReference type="Rhea" id="RHEA:53909"/>
    </physiologicalReaction>
</comment>
<comment type="subunit">
    <text evidence="3">Component of the NuA4 histone acetyltransferase complex.</text>
</comment>
<comment type="subcellular location">
    <subcellularLocation>
        <location evidence="2">Nucleus</location>
    </subcellularLocation>
    <subcellularLocation>
        <location evidence="2">Chromosome</location>
    </subcellularLocation>
    <text evidence="2">Following DNA damage, localizes to sites of DNA damage, such as double stand breaks (DSBs).</text>
</comment>
<comment type="domain">
    <text evidence="3">The ESA1-RPD3 motif is common to ESA1 and RPD3 and is required for ESA1 histone acetyl-transferase (HAT) activity and RPD3 histone deacetylase (HDAC) activity.</text>
</comment>
<comment type="PTM">
    <text evidence="3">Autoacetylation at Lys-316 is required for proper function.</text>
</comment>
<comment type="similarity">
    <text evidence="7">Belongs to the MYST (SAS/MOZ) family.</text>
</comment>